<feature type="chain" id="PRO_0000208363" description="Acetyl-coenzyme A synthetase">
    <location>
        <begin position="1"/>
        <end position="652"/>
    </location>
</feature>
<feature type="binding site" evidence="1">
    <location>
        <begin position="191"/>
        <end position="194"/>
    </location>
    <ligand>
        <name>CoA</name>
        <dbReference type="ChEBI" id="CHEBI:57287"/>
    </ligand>
</feature>
<feature type="binding site" evidence="1">
    <location>
        <position position="311"/>
    </location>
    <ligand>
        <name>CoA</name>
        <dbReference type="ChEBI" id="CHEBI:57287"/>
    </ligand>
</feature>
<feature type="binding site" evidence="1">
    <location>
        <position position="335"/>
    </location>
    <ligand>
        <name>CoA</name>
        <dbReference type="ChEBI" id="CHEBI:57287"/>
    </ligand>
</feature>
<feature type="binding site" evidence="1">
    <location>
        <begin position="387"/>
        <end position="389"/>
    </location>
    <ligand>
        <name>ATP</name>
        <dbReference type="ChEBI" id="CHEBI:30616"/>
    </ligand>
</feature>
<feature type="binding site" evidence="1">
    <location>
        <begin position="411"/>
        <end position="416"/>
    </location>
    <ligand>
        <name>ATP</name>
        <dbReference type="ChEBI" id="CHEBI:30616"/>
    </ligand>
</feature>
<feature type="binding site" evidence="1">
    <location>
        <position position="500"/>
    </location>
    <ligand>
        <name>ATP</name>
        <dbReference type="ChEBI" id="CHEBI:30616"/>
    </ligand>
</feature>
<feature type="binding site" evidence="1">
    <location>
        <position position="515"/>
    </location>
    <ligand>
        <name>ATP</name>
        <dbReference type="ChEBI" id="CHEBI:30616"/>
    </ligand>
</feature>
<feature type="binding site" evidence="1">
    <location>
        <position position="523"/>
    </location>
    <ligand>
        <name>CoA</name>
        <dbReference type="ChEBI" id="CHEBI:57287"/>
    </ligand>
</feature>
<feature type="binding site" evidence="1">
    <location>
        <position position="526"/>
    </location>
    <ligand>
        <name>ATP</name>
        <dbReference type="ChEBI" id="CHEBI:30616"/>
    </ligand>
</feature>
<feature type="binding site" evidence="1">
    <location>
        <position position="537"/>
    </location>
    <ligand>
        <name>Mg(2+)</name>
        <dbReference type="ChEBI" id="CHEBI:18420"/>
    </ligand>
</feature>
<feature type="binding site" evidence="1">
    <location>
        <position position="539"/>
    </location>
    <ligand>
        <name>Mg(2+)</name>
        <dbReference type="ChEBI" id="CHEBI:18420"/>
    </ligand>
</feature>
<feature type="binding site" evidence="1">
    <location>
        <position position="542"/>
    </location>
    <ligand>
        <name>Mg(2+)</name>
        <dbReference type="ChEBI" id="CHEBI:18420"/>
    </ligand>
</feature>
<feature type="binding site" evidence="1">
    <location>
        <position position="584"/>
    </location>
    <ligand>
        <name>CoA</name>
        <dbReference type="ChEBI" id="CHEBI:57287"/>
    </ligand>
</feature>
<feature type="modified residue" description="N6-acetyllysine" evidence="1">
    <location>
        <position position="609"/>
    </location>
</feature>
<accession>Q8FAY8</accession>
<evidence type="ECO:0000255" key="1">
    <source>
        <dbReference type="HAMAP-Rule" id="MF_01123"/>
    </source>
</evidence>
<name>ACSA_ECOL6</name>
<dbReference type="EC" id="6.2.1.1" evidence="1"/>
<dbReference type="EMBL" id="AE014075">
    <property type="protein sequence ID" value="AAN83490.1"/>
    <property type="molecule type" value="Genomic_DNA"/>
</dbReference>
<dbReference type="RefSeq" id="WP_000078223.1">
    <property type="nucleotide sequence ID" value="NZ_CP051263.1"/>
</dbReference>
<dbReference type="SMR" id="Q8FAY8"/>
<dbReference type="STRING" id="199310.c5064"/>
<dbReference type="KEGG" id="ecc:c5064"/>
<dbReference type="eggNOG" id="COG0365">
    <property type="taxonomic scope" value="Bacteria"/>
</dbReference>
<dbReference type="HOGENOM" id="CLU_000022_3_6_6"/>
<dbReference type="BioCyc" id="ECOL199310:C5064-MONOMER"/>
<dbReference type="SABIO-RK" id="Q8FAY8"/>
<dbReference type="Proteomes" id="UP000001410">
    <property type="component" value="Chromosome"/>
</dbReference>
<dbReference type="GO" id="GO:0005829">
    <property type="term" value="C:cytosol"/>
    <property type="evidence" value="ECO:0007669"/>
    <property type="project" value="TreeGrafter"/>
</dbReference>
<dbReference type="GO" id="GO:0003987">
    <property type="term" value="F:acetate-CoA ligase activity"/>
    <property type="evidence" value="ECO:0007669"/>
    <property type="project" value="UniProtKB-UniRule"/>
</dbReference>
<dbReference type="GO" id="GO:0016208">
    <property type="term" value="F:AMP binding"/>
    <property type="evidence" value="ECO:0007669"/>
    <property type="project" value="InterPro"/>
</dbReference>
<dbReference type="GO" id="GO:0005524">
    <property type="term" value="F:ATP binding"/>
    <property type="evidence" value="ECO:0007669"/>
    <property type="project" value="UniProtKB-KW"/>
</dbReference>
<dbReference type="GO" id="GO:0046872">
    <property type="term" value="F:metal ion binding"/>
    <property type="evidence" value="ECO:0007669"/>
    <property type="project" value="UniProtKB-KW"/>
</dbReference>
<dbReference type="GO" id="GO:0019427">
    <property type="term" value="P:acetyl-CoA biosynthetic process from acetate"/>
    <property type="evidence" value="ECO:0007669"/>
    <property type="project" value="UniProtKB-UniRule"/>
</dbReference>
<dbReference type="GO" id="GO:0006935">
    <property type="term" value="P:chemotaxis"/>
    <property type="evidence" value="ECO:0007669"/>
    <property type="project" value="UniProtKB-UniRule"/>
</dbReference>
<dbReference type="CDD" id="cd05966">
    <property type="entry name" value="ACS"/>
    <property type="match status" value="1"/>
</dbReference>
<dbReference type="FunFam" id="3.30.300.30:FF:000004">
    <property type="entry name" value="Acetyl-coenzyme A synthetase"/>
    <property type="match status" value="1"/>
</dbReference>
<dbReference type="FunFam" id="3.40.50.12780:FF:000001">
    <property type="entry name" value="Acetyl-coenzyme A synthetase"/>
    <property type="match status" value="1"/>
</dbReference>
<dbReference type="Gene3D" id="3.30.300.30">
    <property type="match status" value="1"/>
</dbReference>
<dbReference type="Gene3D" id="3.40.50.12780">
    <property type="entry name" value="N-terminal domain of ligase-like"/>
    <property type="match status" value="1"/>
</dbReference>
<dbReference type="HAMAP" id="MF_01123">
    <property type="entry name" value="Ac_CoA_synth"/>
    <property type="match status" value="1"/>
</dbReference>
<dbReference type="InterPro" id="IPR011904">
    <property type="entry name" value="Ac_CoA_lig"/>
</dbReference>
<dbReference type="InterPro" id="IPR032387">
    <property type="entry name" value="ACAS_N"/>
</dbReference>
<dbReference type="InterPro" id="IPR025110">
    <property type="entry name" value="AMP-bd_C"/>
</dbReference>
<dbReference type="InterPro" id="IPR045851">
    <property type="entry name" value="AMP-bd_C_sf"/>
</dbReference>
<dbReference type="InterPro" id="IPR020845">
    <property type="entry name" value="AMP-binding_CS"/>
</dbReference>
<dbReference type="InterPro" id="IPR000873">
    <property type="entry name" value="AMP-dep_synth/lig_dom"/>
</dbReference>
<dbReference type="InterPro" id="IPR042099">
    <property type="entry name" value="ANL_N_sf"/>
</dbReference>
<dbReference type="NCBIfam" id="TIGR02188">
    <property type="entry name" value="Ac_CoA_lig_AcsA"/>
    <property type="match status" value="1"/>
</dbReference>
<dbReference type="NCBIfam" id="NF001208">
    <property type="entry name" value="PRK00174.1"/>
    <property type="match status" value="1"/>
</dbReference>
<dbReference type="PANTHER" id="PTHR24095">
    <property type="entry name" value="ACETYL-COENZYME A SYNTHETASE"/>
    <property type="match status" value="1"/>
</dbReference>
<dbReference type="PANTHER" id="PTHR24095:SF243">
    <property type="entry name" value="ACETYL-COENZYME A SYNTHETASE"/>
    <property type="match status" value="1"/>
</dbReference>
<dbReference type="Pfam" id="PF16177">
    <property type="entry name" value="ACAS_N"/>
    <property type="match status" value="1"/>
</dbReference>
<dbReference type="Pfam" id="PF00501">
    <property type="entry name" value="AMP-binding"/>
    <property type="match status" value="1"/>
</dbReference>
<dbReference type="Pfam" id="PF13193">
    <property type="entry name" value="AMP-binding_C"/>
    <property type="match status" value="1"/>
</dbReference>
<dbReference type="SUPFAM" id="SSF56801">
    <property type="entry name" value="Acetyl-CoA synthetase-like"/>
    <property type="match status" value="1"/>
</dbReference>
<dbReference type="PROSITE" id="PS00455">
    <property type="entry name" value="AMP_BINDING"/>
    <property type="match status" value="1"/>
</dbReference>
<proteinExistence type="inferred from homology"/>
<comment type="function">
    <text evidence="1">Catalyzes the conversion of acetate into acetyl-CoA (AcCoA), an essential intermediate at the junction of anabolic and catabolic pathways. Acs undergoes a two-step reaction. In the first half reaction, Acs combines acetate with ATP to form acetyl-adenylate (AcAMP) intermediate. In the second half reaction, it can then transfer the acetyl group from AcAMP to the sulfhydryl group of CoA, forming the product AcCoA.</text>
</comment>
<comment type="function">
    <text evidence="1">Enables the cell to use acetate during aerobic growth to generate energy via the TCA cycle, and biosynthetic compounds via the glyoxylate shunt. Acetylates CheY, the response regulator involved in flagellar movement and chemotaxis.</text>
</comment>
<comment type="catalytic activity">
    <reaction evidence="1">
        <text>acetate + ATP + CoA = acetyl-CoA + AMP + diphosphate</text>
        <dbReference type="Rhea" id="RHEA:23176"/>
        <dbReference type="ChEBI" id="CHEBI:30089"/>
        <dbReference type="ChEBI" id="CHEBI:30616"/>
        <dbReference type="ChEBI" id="CHEBI:33019"/>
        <dbReference type="ChEBI" id="CHEBI:57287"/>
        <dbReference type="ChEBI" id="CHEBI:57288"/>
        <dbReference type="ChEBI" id="CHEBI:456215"/>
        <dbReference type="EC" id="6.2.1.1"/>
    </reaction>
</comment>
<comment type="cofactor">
    <cofactor evidence="1">
        <name>Mg(2+)</name>
        <dbReference type="ChEBI" id="CHEBI:18420"/>
    </cofactor>
</comment>
<comment type="PTM">
    <text evidence="1">Acetylated. Deacetylation by the SIR2-homolog deacetylase activates the enzyme.</text>
</comment>
<comment type="similarity">
    <text evidence="1">Belongs to the ATP-dependent AMP-binding enzyme family.</text>
</comment>
<keyword id="KW-0007">Acetylation</keyword>
<keyword id="KW-0067">ATP-binding</keyword>
<keyword id="KW-0436">Ligase</keyword>
<keyword id="KW-0460">Magnesium</keyword>
<keyword id="KW-0479">Metal-binding</keyword>
<keyword id="KW-0547">Nucleotide-binding</keyword>
<keyword id="KW-1185">Reference proteome</keyword>
<organism>
    <name type="scientific">Escherichia coli O6:H1 (strain CFT073 / ATCC 700928 / UPEC)</name>
    <dbReference type="NCBI Taxonomy" id="199310"/>
    <lineage>
        <taxon>Bacteria</taxon>
        <taxon>Pseudomonadati</taxon>
        <taxon>Pseudomonadota</taxon>
        <taxon>Gammaproteobacteria</taxon>
        <taxon>Enterobacterales</taxon>
        <taxon>Enterobacteriaceae</taxon>
        <taxon>Escherichia</taxon>
    </lineage>
</organism>
<gene>
    <name evidence="1" type="primary">acs</name>
    <name type="ordered locus">c5064</name>
</gene>
<protein>
    <recommendedName>
        <fullName evidence="1">Acetyl-coenzyme A synthetase</fullName>
        <shortName evidence="1">AcCoA synthetase</shortName>
        <shortName evidence="1">Acs</shortName>
        <ecNumber evidence="1">6.2.1.1</ecNumber>
    </recommendedName>
    <alternativeName>
        <fullName evidence="1">Acetate--CoA ligase</fullName>
    </alternativeName>
    <alternativeName>
        <fullName evidence="1">Acyl-activating enzyme</fullName>
    </alternativeName>
</protein>
<sequence>MSQIHKHTIPANIADRCLINPQQYEAMYQQSINAPDTFWGEQGKILDWITPYQKVKNTSFAPGNVSIKWYEDGTLNLAANCLDRHLQENGDRTAIIWEGDDASQSKHISYKELHRDVCRFANTLLELGIKKGDVVAIYMPMVPEAAVAMLACARIGAVHSVIFGGFSPEAVAGRIIDSSSRLVITSDEGVRAGRSIPLKKNVDDALKNPNVTSVEHVVVLKRTGGKIDWQEGRDLWWHDLVEQASAQHQAEEMNAEDPLFILYTSGSTGKPKGVLHTTGGYLVYAALTFKYVFDYHPGDIYWCTADVGWVTGHSYLLYGPLACGATTLMFEGVPNWPTPARMAQVVDKHQVNILYTAPTAIRALMAEGDKAIEGTDRSSLRILGSVGEPINPEAWEWYWKKIGNEKCPVVDTWWQTETGGFMITPLPGATELKAGSATRPFFGVQPALVDNEGNPLEGATEGSLVITDSWPGQARTLFGDHERFEQTYFSTFKNMYFSGDGARRDEDGYYWITGRVDDVLNVSGHRLGTAEIESALVAHPKIAEAAVVGIPHNIKGQAIYAYVTLNHGEEPSPELYAEVRNWVRKEIGPLATPDVLHWTDSLPKTRSGKIMRRILRKIAAGDTSNLGDTSTLADPGVVEKLLEEKQAIAMPS</sequence>
<reference key="1">
    <citation type="journal article" date="2002" name="Proc. Natl. Acad. Sci. U.S.A.">
        <title>Extensive mosaic structure revealed by the complete genome sequence of uropathogenic Escherichia coli.</title>
        <authorList>
            <person name="Welch R.A."/>
            <person name="Burland V."/>
            <person name="Plunkett G. III"/>
            <person name="Redford P."/>
            <person name="Roesch P."/>
            <person name="Rasko D."/>
            <person name="Buckles E.L."/>
            <person name="Liou S.-R."/>
            <person name="Boutin A."/>
            <person name="Hackett J."/>
            <person name="Stroud D."/>
            <person name="Mayhew G.F."/>
            <person name="Rose D.J."/>
            <person name="Zhou S."/>
            <person name="Schwartz D.C."/>
            <person name="Perna N.T."/>
            <person name="Mobley H.L.T."/>
            <person name="Donnenberg M.S."/>
            <person name="Blattner F.R."/>
        </authorList>
    </citation>
    <scope>NUCLEOTIDE SEQUENCE [LARGE SCALE GENOMIC DNA]</scope>
    <source>
        <strain>CFT073 / ATCC 700928 / UPEC</strain>
    </source>
</reference>